<organism>
    <name type="scientific">Escherichia coli O157:H7</name>
    <dbReference type="NCBI Taxonomy" id="83334"/>
    <lineage>
        <taxon>Bacteria</taxon>
        <taxon>Pseudomonadati</taxon>
        <taxon>Pseudomonadota</taxon>
        <taxon>Gammaproteobacteria</taxon>
        <taxon>Enterobacterales</taxon>
        <taxon>Enterobacteriaceae</taxon>
        <taxon>Escherichia</taxon>
    </lineage>
</organism>
<feature type="chain" id="PRO_0000203511" description="Succinate dehydrogenase cytochrome b556 subunit">
    <location>
        <begin position="1"/>
        <end position="129"/>
    </location>
</feature>
<feature type="topological domain" description="Cytoplasmic" evidence="1">
    <location>
        <begin position="1"/>
        <end position="26"/>
    </location>
</feature>
<feature type="transmembrane region" description="Helical" evidence="1">
    <location>
        <begin position="27"/>
        <end position="52"/>
    </location>
</feature>
<feature type="topological domain" description="Periplasmic" evidence="1">
    <location>
        <begin position="53"/>
        <end position="68"/>
    </location>
</feature>
<feature type="transmembrane region" description="Helical" evidence="1">
    <location>
        <begin position="69"/>
        <end position="89"/>
    </location>
</feature>
<feature type="topological domain" description="Cytoplasmic" evidence="1">
    <location>
        <begin position="90"/>
        <end position="108"/>
    </location>
</feature>
<feature type="transmembrane region" description="Helical" evidence="1">
    <location>
        <begin position="109"/>
        <end position="129"/>
    </location>
</feature>
<feature type="binding site" description="axial binding residue" evidence="1">
    <location>
        <position position="84"/>
    </location>
    <ligand>
        <name>heme</name>
        <dbReference type="ChEBI" id="CHEBI:30413"/>
        <note>ligand shared with second transmembrane subunit</note>
    </ligand>
    <ligandPart>
        <name>Fe</name>
        <dbReference type="ChEBI" id="CHEBI:18248"/>
    </ligandPart>
</feature>
<gene>
    <name type="primary">sdhC</name>
    <name type="synonym">cybA</name>
    <name type="ordered locus">Z0875</name>
    <name type="ordered locus">ECs0746</name>
</gene>
<proteinExistence type="inferred from homology"/>
<protein>
    <recommendedName>
        <fullName>Succinate dehydrogenase cytochrome b556 subunit</fullName>
        <shortName>Cytochrome b-556</shortName>
    </recommendedName>
</protein>
<name>DHSC_ECO57</name>
<reference key="1">
    <citation type="journal article" date="2001" name="Nature">
        <title>Genome sequence of enterohaemorrhagic Escherichia coli O157:H7.</title>
        <authorList>
            <person name="Perna N.T."/>
            <person name="Plunkett G. III"/>
            <person name="Burland V."/>
            <person name="Mau B."/>
            <person name="Glasner J.D."/>
            <person name="Rose D.J."/>
            <person name="Mayhew G.F."/>
            <person name="Evans P.S."/>
            <person name="Gregor J."/>
            <person name="Kirkpatrick H.A."/>
            <person name="Posfai G."/>
            <person name="Hackett J."/>
            <person name="Klink S."/>
            <person name="Boutin A."/>
            <person name="Shao Y."/>
            <person name="Miller L."/>
            <person name="Grotbeck E.J."/>
            <person name="Davis N.W."/>
            <person name="Lim A."/>
            <person name="Dimalanta E.T."/>
            <person name="Potamousis K."/>
            <person name="Apodaca J."/>
            <person name="Anantharaman T.S."/>
            <person name="Lin J."/>
            <person name="Yen G."/>
            <person name="Schwartz D.C."/>
            <person name="Welch R.A."/>
            <person name="Blattner F.R."/>
        </authorList>
    </citation>
    <scope>NUCLEOTIDE SEQUENCE [LARGE SCALE GENOMIC DNA]</scope>
    <source>
        <strain>O157:H7 / EDL933 / ATCC 700927 / EHEC</strain>
    </source>
</reference>
<reference key="2">
    <citation type="journal article" date="2001" name="DNA Res.">
        <title>Complete genome sequence of enterohemorrhagic Escherichia coli O157:H7 and genomic comparison with a laboratory strain K-12.</title>
        <authorList>
            <person name="Hayashi T."/>
            <person name="Makino K."/>
            <person name="Ohnishi M."/>
            <person name="Kurokawa K."/>
            <person name="Ishii K."/>
            <person name="Yokoyama K."/>
            <person name="Han C.-G."/>
            <person name="Ohtsubo E."/>
            <person name="Nakayama K."/>
            <person name="Murata T."/>
            <person name="Tanaka M."/>
            <person name="Tobe T."/>
            <person name="Iida T."/>
            <person name="Takami H."/>
            <person name="Honda T."/>
            <person name="Sasakawa C."/>
            <person name="Ogasawara N."/>
            <person name="Yasunaga T."/>
            <person name="Kuhara S."/>
            <person name="Shiba T."/>
            <person name="Hattori M."/>
            <person name="Shinagawa H."/>
        </authorList>
    </citation>
    <scope>NUCLEOTIDE SEQUENCE [LARGE SCALE GENOMIC DNA]</scope>
    <source>
        <strain>O157:H7 / Sakai / RIMD 0509952 / EHEC</strain>
    </source>
</reference>
<sequence>MIRNVKKQRPVNLDLQTIRFPITAIASILHRVSGVITFVAVGILLWLLGTSLSSPEGFEQASAIMGSFFVKFIMWGILTALAYHVVVGIRHMMMDFGYLEETFEAGKRSAKISFVITVVLSLLAGVLVW</sequence>
<accession>P69055</accession>
<accession>P10446</accession>
<comment type="function">
    <text evidence="1">Membrane-anchoring subunit of succinate dehydrogenase (SDH).</text>
</comment>
<comment type="cofactor">
    <cofactor evidence="1">
        <name>heme</name>
        <dbReference type="ChEBI" id="CHEBI:30413"/>
    </cofactor>
    <text evidence="1">The heme is bound between the two transmembrane subunits.</text>
</comment>
<comment type="pathway">
    <text>Carbohydrate metabolism; tricarboxylic acid cycle.</text>
</comment>
<comment type="subunit">
    <text evidence="1">Part of an enzyme complex containing four subunits: a flavoprotein, an iron-sulfur protein, plus two membrane-anchoring proteins, SdhC and SdhD. The complex can form homotrimers (By similarity).</text>
</comment>
<comment type="subcellular location">
    <subcellularLocation>
        <location evidence="1">Cell inner membrane</location>
        <topology evidence="1">Multi-pass membrane protein</topology>
    </subcellularLocation>
</comment>
<comment type="miscellaneous">
    <text>His-84 provides an axial ligand to heme b556 in the wild-type enzyme. The retention of low spin heme b556 in the SdhC 'Leu-84' mutant suggests that swapping of the heme axial ligand by His-91 or His-30 is possible.</text>
</comment>
<comment type="similarity">
    <text evidence="2">Belongs to the cytochrome b560 family.</text>
</comment>
<comment type="sequence caution" evidence="2">
    <conflict type="erroneous initiation">
        <sequence resource="EMBL-CDS" id="BAB34169"/>
    </conflict>
    <text>Extended N-terminus.</text>
</comment>
<dbReference type="EMBL" id="AE005174">
    <property type="protein sequence ID" value="AAG55045.1"/>
    <property type="molecule type" value="Genomic_DNA"/>
</dbReference>
<dbReference type="EMBL" id="BA000007">
    <property type="protein sequence ID" value="BAB34169.2"/>
    <property type="status" value="ALT_INIT"/>
    <property type="molecule type" value="Genomic_DNA"/>
</dbReference>
<dbReference type="PIR" id="A85573">
    <property type="entry name" value="A85573"/>
</dbReference>
<dbReference type="PIR" id="B90722">
    <property type="entry name" value="B90722"/>
</dbReference>
<dbReference type="RefSeq" id="NP_308773.1">
    <property type="nucleotide sequence ID" value="NC_002695.1"/>
</dbReference>
<dbReference type="SMR" id="P69055"/>
<dbReference type="STRING" id="155864.Z0875"/>
<dbReference type="GeneID" id="917493"/>
<dbReference type="KEGG" id="ece:Z0875"/>
<dbReference type="KEGG" id="ecs:ECs_0746"/>
<dbReference type="PATRIC" id="fig|386585.9.peg.864"/>
<dbReference type="eggNOG" id="COG2009">
    <property type="taxonomic scope" value="Bacteria"/>
</dbReference>
<dbReference type="HOGENOM" id="CLU_094691_2_1_6"/>
<dbReference type="UniPathway" id="UPA00223"/>
<dbReference type="Proteomes" id="UP000000558">
    <property type="component" value="Chromosome"/>
</dbReference>
<dbReference type="Proteomes" id="UP000002519">
    <property type="component" value="Chromosome"/>
</dbReference>
<dbReference type="GO" id="GO:0005886">
    <property type="term" value="C:plasma membrane"/>
    <property type="evidence" value="ECO:0007669"/>
    <property type="project" value="UniProtKB-SubCell"/>
</dbReference>
<dbReference type="GO" id="GO:0009055">
    <property type="term" value="F:electron transfer activity"/>
    <property type="evidence" value="ECO:0007669"/>
    <property type="project" value="InterPro"/>
</dbReference>
<dbReference type="GO" id="GO:0046872">
    <property type="term" value="F:metal ion binding"/>
    <property type="evidence" value="ECO:0007669"/>
    <property type="project" value="UniProtKB-KW"/>
</dbReference>
<dbReference type="GO" id="GO:0006099">
    <property type="term" value="P:tricarboxylic acid cycle"/>
    <property type="evidence" value="ECO:0007669"/>
    <property type="project" value="UniProtKB-UniPathway"/>
</dbReference>
<dbReference type="CDD" id="cd03499">
    <property type="entry name" value="SQR_TypeC_SdhC"/>
    <property type="match status" value="1"/>
</dbReference>
<dbReference type="FunFam" id="1.20.1300.10:FF:000005">
    <property type="entry name" value="Succinate dehydrogenase cytochrome b556 subunit"/>
    <property type="match status" value="1"/>
</dbReference>
<dbReference type="Gene3D" id="1.20.1300.10">
    <property type="entry name" value="Fumarate reductase/succinate dehydrogenase, transmembrane subunit"/>
    <property type="match status" value="1"/>
</dbReference>
<dbReference type="InterPro" id="IPR034804">
    <property type="entry name" value="SQR/QFR_C/D"/>
</dbReference>
<dbReference type="InterPro" id="IPR018495">
    <property type="entry name" value="Succ_DH_cyt_bsu_CS"/>
</dbReference>
<dbReference type="InterPro" id="IPR014314">
    <property type="entry name" value="Succ_DH_cytb556"/>
</dbReference>
<dbReference type="InterPro" id="IPR000701">
    <property type="entry name" value="SuccDH_FuR_B_TM-su"/>
</dbReference>
<dbReference type="NCBIfam" id="NF007021">
    <property type="entry name" value="PRK09487.1"/>
    <property type="match status" value="1"/>
</dbReference>
<dbReference type="NCBIfam" id="TIGR02970">
    <property type="entry name" value="succ_dehyd_cytB"/>
    <property type="match status" value="1"/>
</dbReference>
<dbReference type="PANTHER" id="PTHR10978">
    <property type="entry name" value="SUCCINATE DEHYDROGENASE CYTOCHROME B560 SUBUNIT"/>
    <property type="match status" value="1"/>
</dbReference>
<dbReference type="PANTHER" id="PTHR10978:SF5">
    <property type="entry name" value="SUCCINATE DEHYDROGENASE CYTOCHROME B560 SUBUNIT, MITOCHONDRIAL"/>
    <property type="match status" value="1"/>
</dbReference>
<dbReference type="Pfam" id="PF01127">
    <property type="entry name" value="Sdh_cyt"/>
    <property type="match status" value="1"/>
</dbReference>
<dbReference type="PIRSF" id="PIRSF000178">
    <property type="entry name" value="SDH_cyt_b560"/>
    <property type="match status" value="1"/>
</dbReference>
<dbReference type="SUPFAM" id="SSF81343">
    <property type="entry name" value="Fumarate reductase respiratory complex transmembrane subunits"/>
    <property type="match status" value="1"/>
</dbReference>
<dbReference type="PROSITE" id="PS01000">
    <property type="entry name" value="SDH_CYT_1"/>
    <property type="match status" value="1"/>
</dbReference>
<dbReference type="PROSITE" id="PS01001">
    <property type="entry name" value="SDH_CYT_2"/>
    <property type="match status" value="1"/>
</dbReference>
<keyword id="KW-0997">Cell inner membrane</keyword>
<keyword id="KW-1003">Cell membrane</keyword>
<keyword id="KW-0249">Electron transport</keyword>
<keyword id="KW-0349">Heme</keyword>
<keyword id="KW-0408">Iron</keyword>
<keyword id="KW-0472">Membrane</keyword>
<keyword id="KW-0479">Metal-binding</keyword>
<keyword id="KW-1185">Reference proteome</keyword>
<keyword id="KW-0812">Transmembrane</keyword>
<keyword id="KW-1133">Transmembrane helix</keyword>
<keyword id="KW-0813">Transport</keyword>
<keyword id="KW-0816">Tricarboxylic acid cycle</keyword>
<evidence type="ECO:0000250" key="1"/>
<evidence type="ECO:0000305" key="2"/>